<name>SELO_BURPS</name>
<evidence type="ECO:0000255" key="1">
    <source>
        <dbReference type="HAMAP-Rule" id="MF_00692"/>
    </source>
</evidence>
<evidence type="ECO:0000305" key="2"/>
<comment type="function">
    <text evidence="1">Nucleotidyltransferase involved in the post-translational modification of proteins. It can catalyze the addition of adenosine monophosphate (AMP) or uridine monophosphate (UMP) to a protein, resulting in modifications known as AMPylation and UMPylation.</text>
</comment>
<comment type="catalytic activity">
    <reaction evidence="1">
        <text>L-seryl-[protein] + ATP = 3-O-(5'-adenylyl)-L-seryl-[protein] + diphosphate</text>
        <dbReference type="Rhea" id="RHEA:58120"/>
        <dbReference type="Rhea" id="RHEA-COMP:9863"/>
        <dbReference type="Rhea" id="RHEA-COMP:15073"/>
        <dbReference type="ChEBI" id="CHEBI:29999"/>
        <dbReference type="ChEBI" id="CHEBI:30616"/>
        <dbReference type="ChEBI" id="CHEBI:33019"/>
        <dbReference type="ChEBI" id="CHEBI:142516"/>
        <dbReference type="EC" id="2.7.7.108"/>
    </reaction>
</comment>
<comment type="catalytic activity">
    <reaction evidence="1">
        <text>L-threonyl-[protein] + ATP = 3-O-(5'-adenylyl)-L-threonyl-[protein] + diphosphate</text>
        <dbReference type="Rhea" id="RHEA:54292"/>
        <dbReference type="Rhea" id="RHEA-COMP:11060"/>
        <dbReference type="Rhea" id="RHEA-COMP:13847"/>
        <dbReference type="ChEBI" id="CHEBI:30013"/>
        <dbReference type="ChEBI" id="CHEBI:30616"/>
        <dbReference type="ChEBI" id="CHEBI:33019"/>
        <dbReference type="ChEBI" id="CHEBI:138113"/>
        <dbReference type="EC" id="2.7.7.108"/>
    </reaction>
</comment>
<comment type="catalytic activity">
    <reaction evidence="1">
        <text>L-tyrosyl-[protein] + ATP = O-(5'-adenylyl)-L-tyrosyl-[protein] + diphosphate</text>
        <dbReference type="Rhea" id="RHEA:54288"/>
        <dbReference type="Rhea" id="RHEA-COMP:10136"/>
        <dbReference type="Rhea" id="RHEA-COMP:13846"/>
        <dbReference type="ChEBI" id="CHEBI:30616"/>
        <dbReference type="ChEBI" id="CHEBI:33019"/>
        <dbReference type="ChEBI" id="CHEBI:46858"/>
        <dbReference type="ChEBI" id="CHEBI:83624"/>
        <dbReference type="EC" id="2.7.7.108"/>
    </reaction>
</comment>
<comment type="catalytic activity">
    <reaction evidence="1">
        <text>L-histidyl-[protein] + UTP = N(tele)-(5'-uridylyl)-L-histidyl-[protein] + diphosphate</text>
        <dbReference type="Rhea" id="RHEA:83891"/>
        <dbReference type="Rhea" id="RHEA-COMP:9745"/>
        <dbReference type="Rhea" id="RHEA-COMP:20239"/>
        <dbReference type="ChEBI" id="CHEBI:29979"/>
        <dbReference type="ChEBI" id="CHEBI:33019"/>
        <dbReference type="ChEBI" id="CHEBI:46398"/>
        <dbReference type="ChEBI" id="CHEBI:233474"/>
    </reaction>
</comment>
<comment type="catalytic activity">
    <reaction evidence="1">
        <text>L-seryl-[protein] + UTP = O-(5'-uridylyl)-L-seryl-[protein] + diphosphate</text>
        <dbReference type="Rhea" id="RHEA:64604"/>
        <dbReference type="Rhea" id="RHEA-COMP:9863"/>
        <dbReference type="Rhea" id="RHEA-COMP:16635"/>
        <dbReference type="ChEBI" id="CHEBI:29999"/>
        <dbReference type="ChEBI" id="CHEBI:33019"/>
        <dbReference type="ChEBI" id="CHEBI:46398"/>
        <dbReference type="ChEBI" id="CHEBI:156051"/>
    </reaction>
</comment>
<comment type="catalytic activity">
    <reaction evidence="1">
        <text>L-tyrosyl-[protein] + UTP = O-(5'-uridylyl)-L-tyrosyl-[protein] + diphosphate</text>
        <dbReference type="Rhea" id="RHEA:83887"/>
        <dbReference type="Rhea" id="RHEA-COMP:10136"/>
        <dbReference type="Rhea" id="RHEA-COMP:20238"/>
        <dbReference type="ChEBI" id="CHEBI:33019"/>
        <dbReference type="ChEBI" id="CHEBI:46398"/>
        <dbReference type="ChEBI" id="CHEBI:46858"/>
        <dbReference type="ChEBI" id="CHEBI:90602"/>
    </reaction>
</comment>
<comment type="cofactor">
    <cofactor evidence="1">
        <name>Mg(2+)</name>
        <dbReference type="ChEBI" id="CHEBI:18420"/>
    </cofactor>
    <cofactor evidence="1">
        <name>Mn(2+)</name>
        <dbReference type="ChEBI" id="CHEBI:29035"/>
    </cofactor>
</comment>
<comment type="similarity">
    <text evidence="1">Belongs to the SELO family.</text>
</comment>
<comment type="sequence caution" evidence="2">
    <conflict type="erroneous initiation">
        <sequence resource="EMBL-CDS" id="CAH35424"/>
    </conflict>
</comment>
<sequence>MSFSRSEAAPAAPLPDLAATLAAPRDDAFQQLGAAFVTRLPAAPLPAPYVVGFSDDAARMLGLEPALRDAPGFAELFCGNPTRDWPQASLPYASVYSGHQFGVWAGQLGDGRALTIGELAHDGRRYELQLKGAGRTPYSRMGDGRAVLRSSIREFLCSEAMHHLGIPTTRALAVIGSDQPVVREEIETSAVVTRVAQSFVRFGHFEHFFANDRPEQLRALADHVIERFYPACRDADDPYLALLAEATRRTAELVAQWQAVGFCHGVMNTDNMSILGLTIDYGPFGFIDAFDAKHVCNHSDTQGRYAYRMQPRIAHWNCFCLAQALLPLIGLHRDAPSEDARAERAVEDAHAVLGRFPEQFGPALERAMRAKLGLALEREGDAALANQLLEIMDASHADFTLTFRHLARVSKHDARGDAPVRDLFIDRDAFDRWANLYRARLSEEARDDASRAAAMNRVNPKYVLRNHLAETAIRRAKEKDFSEVERLAAVLRRPFDEQPEHDAYAALPPDWASTLEVSCSS</sequence>
<organism>
    <name type="scientific">Burkholderia pseudomallei (strain K96243)</name>
    <dbReference type="NCBI Taxonomy" id="272560"/>
    <lineage>
        <taxon>Bacteria</taxon>
        <taxon>Pseudomonadati</taxon>
        <taxon>Pseudomonadota</taxon>
        <taxon>Betaproteobacteria</taxon>
        <taxon>Burkholderiales</taxon>
        <taxon>Burkholderiaceae</taxon>
        <taxon>Burkholderia</taxon>
        <taxon>pseudomallei group</taxon>
    </lineage>
</organism>
<proteinExistence type="inferred from homology"/>
<protein>
    <recommendedName>
        <fullName evidence="1">Protein nucleotidyltransferase YdiU</fullName>
        <ecNumber evidence="1">2.7.7.-</ecNumber>
    </recommendedName>
    <alternativeName>
        <fullName evidence="1">Protein adenylyltransferase YdiU</fullName>
        <ecNumber evidence="1">2.7.7.108</ecNumber>
    </alternativeName>
    <alternativeName>
        <fullName evidence="1">Protein uridylyltransferase YdiU</fullName>
        <ecNumber evidence="1">2.7.7.-</ecNumber>
    </alternativeName>
</protein>
<reference key="1">
    <citation type="journal article" date="2004" name="Proc. Natl. Acad. Sci. U.S.A.">
        <title>Genomic plasticity of the causative agent of melioidosis, Burkholderia pseudomallei.</title>
        <authorList>
            <person name="Holden M.T.G."/>
            <person name="Titball R.W."/>
            <person name="Peacock S.J."/>
            <person name="Cerdeno-Tarraga A.-M."/>
            <person name="Atkins T."/>
            <person name="Crossman L.C."/>
            <person name="Pitt T."/>
            <person name="Churcher C."/>
            <person name="Mungall K.L."/>
            <person name="Bentley S.D."/>
            <person name="Sebaihia M."/>
            <person name="Thomson N.R."/>
            <person name="Bason N."/>
            <person name="Beacham I.R."/>
            <person name="Brooks K."/>
            <person name="Brown K.A."/>
            <person name="Brown N.F."/>
            <person name="Challis G.L."/>
            <person name="Cherevach I."/>
            <person name="Chillingworth T."/>
            <person name="Cronin A."/>
            <person name="Crossett B."/>
            <person name="Davis P."/>
            <person name="DeShazer D."/>
            <person name="Feltwell T."/>
            <person name="Fraser A."/>
            <person name="Hance Z."/>
            <person name="Hauser H."/>
            <person name="Holroyd S."/>
            <person name="Jagels K."/>
            <person name="Keith K.E."/>
            <person name="Maddison M."/>
            <person name="Moule S."/>
            <person name="Price C."/>
            <person name="Quail M.A."/>
            <person name="Rabbinowitsch E."/>
            <person name="Rutherford K."/>
            <person name="Sanders M."/>
            <person name="Simmonds M."/>
            <person name="Songsivilai S."/>
            <person name="Stevens K."/>
            <person name="Tumapa S."/>
            <person name="Vesaratchavest M."/>
            <person name="Whitehead S."/>
            <person name="Yeats C."/>
            <person name="Barrell B.G."/>
            <person name="Oyston P.C.F."/>
            <person name="Parkhill J."/>
        </authorList>
    </citation>
    <scope>NUCLEOTIDE SEQUENCE [LARGE SCALE GENOMIC DNA]</scope>
    <source>
        <strain>K96243</strain>
    </source>
</reference>
<feature type="chain" id="PRO_0000271813" description="Protein nucleotidyltransferase YdiU">
    <location>
        <begin position="1"/>
        <end position="521"/>
    </location>
</feature>
<feature type="active site" description="Proton acceptor" evidence="1">
    <location>
        <position position="270"/>
    </location>
</feature>
<feature type="binding site" evidence="1">
    <location>
        <position position="109"/>
    </location>
    <ligand>
        <name>ATP</name>
        <dbReference type="ChEBI" id="CHEBI:30616"/>
    </ligand>
</feature>
<feature type="binding site" evidence="1">
    <location>
        <position position="111"/>
    </location>
    <ligand>
        <name>ATP</name>
        <dbReference type="ChEBI" id="CHEBI:30616"/>
    </ligand>
</feature>
<feature type="binding site" evidence="1">
    <location>
        <position position="112"/>
    </location>
    <ligand>
        <name>ATP</name>
        <dbReference type="ChEBI" id="CHEBI:30616"/>
    </ligand>
</feature>
<feature type="binding site" evidence="1">
    <location>
        <position position="131"/>
    </location>
    <ligand>
        <name>ATP</name>
        <dbReference type="ChEBI" id="CHEBI:30616"/>
    </ligand>
</feature>
<feature type="binding site" evidence="1">
    <location>
        <position position="143"/>
    </location>
    <ligand>
        <name>ATP</name>
        <dbReference type="ChEBI" id="CHEBI:30616"/>
    </ligand>
</feature>
<feature type="binding site" evidence="1">
    <location>
        <position position="144"/>
    </location>
    <ligand>
        <name>ATP</name>
        <dbReference type="ChEBI" id="CHEBI:30616"/>
    </ligand>
</feature>
<feature type="binding site" evidence="1">
    <location>
        <position position="194"/>
    </location>
    <ligand>
        <name>ATP</name>
        <dbReference type="ChEBI" id="CHEBI:30616"/>
    </ligand>
</feature>
<feature type="binding site" evidence="1">
    <location>
        <position position="201"/>
    </location>
    <ligand>
        <name>ATP</name>
        <dbReference type="ChEBI" id="CHEBI:30616"/>
    </ligand>
</feature>
<feature type="binding site" evidence="1">
    <location>
        <position position="271"/>
    </location>
    <ligand>
        <name>Mg(2+)</name>
        <dbReference type="ChEBI" id="CHEBI:18420"/>
    </ligand>
</feature>
<feature type="binding site" evidence="1">
    <location>
        <position position="280"/>
    </location>
    <ligand>
        <name>ATP</name>
        <dbReference type="ChEBI" id="CHEBI:30616"/>
    </ligand>
</feature>
<feature type="binding site" evidence="1">
    <location>
        <position position="280"/>
    </location>
    <ligand>
        <name>Mg(2+)</name>
        <dbReference type="ChEBI" id="CHEBI:18420"/>
    </ligand>
</feature>
<gene>
    <name evidence="1" type="primary">ydiU</name>
    <name evidence="1" type="synonym">selO</name>
    <name type="ordered locus">BPSL1422</name>
</gene>
<dbReference type="EC" id="2.7.7.-" evidence="1"/>
<dbReference type="EC" id="2.7.7.108" evidence="1"/>
<dbReference type="EMBL" id="BX571965">
    <property type="protein sequence ID" value="CAH35424.1"/>
    <property type="status" value="ALT_INIT"/>
    <property type="molecule type" value="Genomic_DNA"/>
</dbReference>
<dbReference type="RefSeq" id="WP_004538218.1">
    <property type="nucleotide sequence ID" value="NZ_CP009538.1"/>
</dbReference>
<dbReference type="RefSeq" id="YP_108044.1">
    <property type="nucleotide sequence ID" value="NC_006350.1"/>
</dbReference>
<dbReference type="SMR" id="Q63V22"/>
<dbReference type="STRING" id="272560.BPSL1422"/>
<dbReference type="KEGG" id="bps:BPSL1422"/>
<dbReference type="PATRIC" id="fig|272560.51.peg.3441"/>
<dbReference type="eggNOG" id="COG0397">
    <property type="taxonomic scope" value="Bacteria"/>
</dbReference>
<dbReference type="Proteomes" id="UP000000605">
    <property type="component" value="Chromosome 1"/>
</dbReference>
<dbReference type="GO" id="GO:0070733">
    <property type="term" value="F:AMPylase activity"/>
    <property type="evidence" value="ECO:0007669"/>
    <property type="project" value="RHEA"/>
</dbReference>
<dbReference type="GO" id="GO:0005524">
    <property type="term" value="F:ATP binding"/>
    <property type="evidence" value="ECO:0007669"/>
    <property type="project" value="UniProtKB-UniRule"/>
</dbReference>
<dbReference type="GO" id="GO:0000287">
    <property type="term" value="F:magnesium ion binding"/>
    <property type="evidence" value="ECO:0007669"/>
    <property type="project" value="UniProtKB-UniRule"/>
</dbReference>
<dbReference type="HAMAP" id="MF_00692">
    <property type="entry name" value="YdiU_SelO"/>
    <property type="match status" value="1"/>
</dbReference>
<dbReference type="InterPro" id="IPR003846">
    <property type="entry name" value="SelO"/>
</dbReference>
<dbReference type="NCBIfam" id="NF000658">
    <property type="entry name" value="PRK00029.1"/>
    <property type="match status" value="1"/>
</dbReference>
<dbReference type="PANTHER" id="PTHR32057">
    <property type="entry name" value="PROTEIN ADENYLYLTRANSFERASE SELO, MITOCHONDRIAL"/>
    <property type="match status" value="1"/>
</dbReference>
<dbReference type="PANTHER" id="PTHR32057:SF14">
    <property type="entry name" value="PROTEIN ADENYLYLTRANSFERASE SELO, MITOCHONDRIAL"/>
    <property type="match status" value="1"/>
</dbReference>
<dbReference type="Pfam" id="PF02696">
    <property type="entry name" value="SelO"/>
    <property type="match status" value="1"/>
</dbReference>
<accession>Q63V22</accession>
<keyword id="KW-0067">ATP-binding</keyword>
<keyword id="KW-0460">Magnesium</keyword>
<keyword id="KW-0464">Manganese</keyword>
<keyword id="KW-0479">Metal-binding</keyword>
<keyword id="KW-0547">Nucleotide-binding</keyword>
<keyword id="KW-0548">Nucleotidyltransferase</keyword>
<keyword id="KW-1185">Reference proteome</keyword>
<keyword id="KW-0808">Transferase</keyword>